<organism>
    <name type="scientific">Brucella abortus (strain 2308)</name>
    <dbReference type="NCBI Taxonomy" id="359391"/>
    <lineage>
        <taxon>Bacteria</taxon>
        <taxon>Pseudomonadati</taxon>
        <taxon>Pseudomonadota</taxon>
        <taxon>Alphaproteobacteria</taxon>
        <taxon>Hyphomicrobiales</taxon>
        <taxon>Brucellaceae</taxon>
        <taxon>Brucella/Ochrobactrum group</taxon>
        <taxon>Brucella</taxon>
    </lineage>
</organism>
<name>RL1_BRUA2</name>
<comment type="function">
    <text evidence="1">Binds directly to 23S rRNA. The L1 stalk is quite mobile in the ribosome, and is involved in E site tRNA release.</text>
</comment>
<comment type="function">
    <text evidence="1">Protein L1 is also a translational repressor protein, it controls the translation of the L11 operon by binding to its mRNA.</text>
</comment>
<comment type="subunit">
    <text evidence="1">Part of the 50S ribosomal subunit.</text>
</comment>
<comment type="similarity">
    <text evidence="1">Belongs to the universal ribosomal protein uL1 family.</text>
</comment>
<evidence type="ECO:0000255" key="1">
    <source>
        <dbReference type="HAMAP-Rule" id="MF_01318"/>
    </source>
</evidence>
<evidence type="ECO:0000305" key="2"/>
<feature type="chain" id="PRO_0000230594" description="Large ribosomal subunit protein uL1">
    <location>
        <begin position="1"/>
        <end position="233"/>
    </location>
</feature>
<accession>Q2YM12</accession>
<reference key="1">
    <citation type="journal article" date="2005" name="Infect. Immun.">
        <title>Whole-genome analyses of speciation events in pathogenic Brucellae.</title>
        <authorList>
            <person name="Chain P.S."/>
            <person name="Comerci D.J."/>
            <person name="Tolmasky M.E."/>
            <person name="Larimer F.W."/>
            <person name="Malfatti S.A."/>
            <person name="Vergez L.M."/>
            <person name="Aguero F."/>
            <person name="Land M.L."/>
            <person name="Ugalde R.A."/>
            <person name="Garcia E."/>
        </authorList>
    </citation>
    <scope>NUCLEOTIDE SEQUENCE [LARGE SCALE GENOMIC DNA]</scope>
    <source>
        <strain>2308</strain>
    </source>
</reference>
<proteinExistence type="inferred from homology"/>
<protein>
    <recommendedName>
        <fullName evidence="1">Large ribosomal subunit protein uL1</fullName>
    </recommendedName>
    <alternativeName>
        <fullName evidence="2">50S ribosomal protein L1</fullName>
    </alternativeName>
</protein>
<keyword id="KW-1185">Reference proteome</keyword>
<keyword id="KW-0678">Repressor</keyword>
<keyword id="KW-0687">Ribonucleoprotein</keyword>
<keyword id="KW-0689">Ribosomal protein</keyword>
<keyword id="KW-0694">RNA-binding</keyword>
<keyword id="KW-0699">rRNA-binding</keyword>
<keyword id="KW-0810">Translation regulation</keyword>
<keyword id="KW-0820">tRNA-binding</keyword>
<gene>
    <name evidence="1" type="primary">rplA</name>
    <name type="ordered locus">BAB1_1267</name>
</gene>
<sequence>MAKISKRINKIREGVDRNKLYDLSAAIGLVKERAVAKFDETVEIAMNLGVDPRHADQMVRGVVNLPNGTGRTVRVAVFARGDKAEEAKKAGADIVGAEELFEIVNGGKIEFDRCIATPDMMPLVGRLGKVLGPRGMMPNPKVGTVTTDVAAAVAASKGGAVEFRVEKAGIIHAGIGKVSFDNAKLEENIKAFADAVIKAKPSAAKGEYVKRVSISSTMGVGVKVDPSTVKVVD</sequence>
<dbReference type="EMBL" id="AM040264">
    <property type="protein sequence ID" value="CAJ11223.1"/>
    <property type="molecule type" value="Genomic_DNA"/>
</dbReference>
<dbReference type="RefSeq" id="WP_002964373.1">
    <property type="nucleotide sequence ID" value="NZ_KN046823.1"/>
</dbReference>
<dbReference type="SMR" id="Q2YM12"/>
<dbReference type="STRING" id="359391.BAB1_1267"/>
<dbReference type="GeneID" id="97533514"/>
<dbReference type="KEGG" id="bmf:BAB1_1267"/>
<dbReference type="PATRIC" id="fig|359391.11.peg.167"/>
<dbReference type="HOGENOM" id="CLU_062853_0_0_5"/>
<dbReference type="PhylomeDB" id="Q2YM12"/>
<dbReference type="Proteomes" id="UP000002719">
    <property type="component" value="Chromosome I"/>
</dbReference>
<dbReference type="GO" id="GO:0022625">
    <property type="term" value="C:cytosolic large ribosomal subunit"/>
    <property type="evidence" value="ECO:0007669"/>
    <property type="project" value="TreeGrafter"/>
</dbReference>
<dbReference type="GO" id="GO:0019843">
    <property type="term" value="F:rRNA binding"/>
    <property type="evidence" value="ECO:0007669"/>
    <property type="project" value="UniProtKB-UniRule"/>
</dbReference>
<dbReference type="GO" id="GO:0003735">
    <property type="term" value="F:structural constituent of ribosome"/>
    <property type="evidence" value="ECO:0007669"/>
    <property type="project" value="InterPro"/>
</dbReference>
<dbReference type="GO" id="GO:0000049">
    <property type="term" value="F:tRNA binding"/>
    <property type="evidence" value="ECO:0007669"/>
    <property type="project" value="UniProtKB-KW"/>
</dbReference>
<dbReference type="GO" id="GO:0006417">
    <property type="term" value="P:regulation of translation"/>
    <property type="evidence" value="ECO:0007669"/>
    <property type="project" value="UniProtKB-KW"/>
</dbReference>
<dbReference type="GO" id="GO:0006412">
    <property type="term" value="P:translation"/>
    <property type="evidence" value="ECO:0007669"/>
    <property type="project" value="UniProtKB-UniRule"/>
</dbReference>
<dbReference type="CDD" id="cd00403">
    <property type="entry name" value="Ribosomal_L1"/>
    <property type="match status" value="1"/>
</dbReference>
<dbReference type="FunFam" id="3.40.50.790:FF:000001">
    <property type="entry name" value="50S ribosomal protein L1"/>
    <property type="match status" value="1"/>
</dbReference>
<dbReference type="Gene3D" id="3.30.190.20">
    <property type="match status" value="1"/>
</dbReference>
<dbReference type="Gene3D" id="3.40.50.790">
    <property type="match status" value="1"/>
</dbReference>
<dbReference type="HAMAP" id="MF_01318_B">
    <property type="entry name" value="Ribosomal_uL1_B"/>
    <property type="match status" value="1"/>
</dbReference>
<dbReference type="InterPro" id="IPR005878">
    <property type="entry name" value="Ribosom_uL1_bac-type"/>
</dbReference>
<dbReference type="InterPro" id="IPR002143">
    <property type="entry name" value="Ribosomal_uL1"/>
</dbReference>
<dbReference type="InterPro" id="IPR023674">
    <property type="entry name" value="Ribosomal_uL1-like"/>
</dbReference>
<dbReference type="InterPro" id="IPR028364">
    <property type="entry name" value="Ribosomal_uL1/biogenesis"/>
</dbReference>
<dbReference type="InterPro" id="IPR016095">
    <property type="entry name" value="Ribosomal_uL1_3-a/b-sand"/>
</dbReference>
<dbReference type="InterPro" id="IPR023673">
    <property type="entry name" value="Ribosomal_uL1_CS"/>
</dbReference>
<dbReference type="NCBIfam" id="TIGR01169">
    <property type="entry name" value="rplA_bact"/>
    <property type="match status" value="1"/>
</dbReference>
<dbReference type="PANTHER" id="PTHR36427">
    <property type="entry name" value="54S RIBOSOMAL PROTEIN L1, MITOCHONDRIAL"/>
    <property type="match status" value="1"/>
</dbReference>
<dbReference type="PANTHER" id="PTHR36427:SF3">
    <property type="entry name" value="LARGE RIBOSOMAL SUBUNIT PROTEIN UL1M"/>
    <property type="match status" value="1"/>
</dbReference>
<dbReference type="Pfam" id="PF00687">
    <property type="entry name" value="Ribosomal_L1"/>
    <property type="match status" value="1"/>
</dbReference>
<dbReference type="PIRSF" id="PIRSF002155">
    <property type="entry name" value="Ribosomal_L1"/>
    <property type="match status" value="1"/>
</dbReference>
<dbReference type="SUPFAM" id="SSF56808">
    <property type="entry name" value="Ribosomal protein L1"/>
    <property type="match status" value="1"/>
</dbReference>
<dbReference type="PROSITE" id="PS01199">
    <property type="entry name" value="RIBOSOMAL_L1"/>
    <property type="match status" value="1"/>
</dbReference>